<feature type="chain" id="PRO_0000147570" description="Putative methyltransferase mtx subunit H">
    <location>
        <begin position="1"/>
        <end position="310"/>
    </location>
</feature>
<organism>
    <name type="scientific">Methanosarcina barkeri (strain Fusaro / DSM 804)</name>
    <dbReference type="NCBI Taxonomy" id="269797"/>
    <lineage>
        <taxon>Archaea</taxon>
        <taxon>Methanobacteriati</taxon>
        <taxon>Methanobacteriota</taxon>
        <taxon>Stenosarchaea group</taxon>
        <taxon>Methanomicrobia</taxon>
        <taxon>Methanosarcinales</taxon>
        <taxon>Methanosarcinaceae</taxon>
        <taxon>Methanosarcina</taxon>
    </lineage>
</organism>
<sequence length="310" mass="33431">MFKFQKEQEIVNIAGVKIGGQPGELPTVLAGTIFYDKHEIVKDVARGLFDRDAAEKLINLQESSAEETGNPYIIHIFGTTPESITRYIDFVAEISEAPFLIDSPEGTVRSHAAEYVSEIGLADKAIYNSINMSINASEIEALALSDIDSSIILGFNAMDSSLQGRMEMLENGAGLLEEGLLSIADRCGIVNKLIDPSITPMGNGAGVALKMTITAKAKWGHPTGSGIHNAPSAWNWLNKKKEKDPVLYKICDVGSTCLQQAAAGDFILYGPIEYAPYIFPMAAMSDIMISEAVADLGIEPASRHPLNLLV</sequence>
<reference key="1">
    <citation type="journal article" date="1997" name="Eur. J. Biochem.">
        <title>Identification of the active site histidine in the corrinoid protein MtrA of the energy-conserving methyltransferase complex from Methanobacterium thermoautotrophicum.</title>
        <authorList>
            <person name="Harms U."/>
            <person name="Thauer R.K."/>
        </authorList>
    </citation>
    <scope>NUCLEOTIDE SEQUENCE [GENOMIC DNA]</scope>
</reference>
<reference key="2">
    <citation type="journal article" date="2006" name="J. Bacteriol.">
        <title>The Methanosarcina barkeri genome: comparative analysis with Methanosarcina acetivorans and Methanosarcina mazei reveals extensive rearrangement within methanosarcinal genomes.</title>
        <authorList>
            <person name="Maeder D.L."/>
            <person name="Anderson I."/>
            <person name="Brettin T.S."/>
            <person name="Bruce D.C."/>
            <person name="Gilna P."/>
            <person name="Han C.S."/>
            <person name="Lapidus A."/>
            <person name="Metcalf W.W."/>
            <person name="Saunders E."/>
            <person name="Tapia R."/>
            <person name="Sowers K.R."/>
        </authorList>
    </citation>
    <scope>NUCLEOTIDE SEQUENCE [LARGE SCALE GENOMIC DNA]</scope>
    <source>
        <strain>Fusaro / DSM 804</strain>
    </source>
</reference>
<keyword id="KW-0489">Methyltransferase</keyword>
<keyword id="KW-0808">Transferase</keyword>
<name>MTXH_METBF</name>
<comment type="subunit">
    <text>May be part of a complex composed of 3 subunits; MtxA, MtxH and MtxX.</text>
</comment>
<comment type="similarity">
    <text evidence="1">Belongs to the MtrH family.</text>
</comment>
<evidence type="ECO:0000305" key="1"/>
<protein>
    <recommendedName>
        <fullName>Putative methyltransferase mtx subunit H</fullName>
        <ecNumber>2.1.1.-</ecNumber>
    </recommendedName>
</protein>
<dbReference type="EC" id="2.1.1.-"/>
<dbReference type="EMBL" id="Y14612">
    <property type="protein sequence ID" value="CAA74964.1"/>
    <property type="molecule type" value="Genomic_DNA"/>
</dbReference>
<dbReference type="EMBL" id="CP000099">
    <property type="protein sequence ID" value="AAZ71003.1"/>
    <property type="molecule type" value="Genomic_DNA"/>
</dbReference>
<dbReference type="SMR" id="O32855"/>
<dbReference type="STRING" id="269797.Mbar_A2072"/>
<dbReference type="PaxDb" id="269797-Mbar_A2072"/>
<dbReference type="KEGG" id="mba:Mbar_A2072"/>
<dbReference type="eggNOG" id="arCOG04336">
    <property type="taxonomic scope" value="Archaea"/>
</dbReference>
<dbReference type="HOGENOM" id="CLU_048697_0_0_2"/>
<dbReference type="OrthoDB" id="18811at2157"/>
<dbReference type="GO" id="GO:0008168">
    <property type="term" value="F:methyltransferase activity"/>
    <property type="evidence" value="ECO:0007669"/>
    <property type="project" value="UniProtKB-KW"/>
</dbReference>
<dbReference type="GO" id="GO:0032259">
    <property type="term" value="P:methylation"/>
    <property type="evidence" value="ECO:0007669"/>
    <property type="project" value="UniProtKB-KW"/>
</dbReference>
<dbReference type="GO" id="GO:0006730">
    <property type="term" value="P:one-carbon metabolic process"/>
    <property type="evidence" value="ECO:0007669"/>
    <property type="project" value="InterPro"/>
</dbReference>
<dbReference type="InterPro" id="IPR011005">
    <property type="entry name" value="Dihydropteroate_synth-like_sf"/>
</dbReference>
<dbReference type="InterPro" id="IPR023467">
    <property type="entry name" value="MeTrfase_MtrH/MtxH"/>
</dbReference>
<dbReference type="InterPro" id="IPR028342">
    <property type="entry name" value="MtrH"/>
</dbReference>
<dbReference type="NCBIfam" id="TIGR01114">
    <property type="entry name" value="mtrH"/>
    <property type="match status" value="1"/>
</dbReference>
<dbReference type="Pfam" id="PF02007">
    <property type="entry name" value="MtrH"/>
    <property type="match status" value="1"/>
</dbReference>
<dbReference type="PIRSF" id="PIRSF500206">
    <property type="entry name" value="MtrH"/>
    <property type="match status" value="1"/>
</dbReference>
<dbReference type="PIRSF" id="PIRSF004960">
    <property type="entry name" value="MtrH_MtxH"/>
    <property type="match status" value="1"/>
</dbReference>
<dbReference type="SUPFAM" id="SSF51717">
    <property type="entry name" value="Dihydropteroate synthetase-like"/>
    <property type="match status" value="1"/>
</dbReference>
<accession>O32855</accession>
<accession>Q46AT9</accession>
<proteinExistence type="inferred from homology"/>
<gene>
    <name type="primary">mtxH</name>
    <name type="ordered locus">Mbar_A2072</name>
</gene>